<keyword id="KW-0007">Acetylation</keyword>
<keyword id="KW-0025">Alternative splicing</keyword>
<keyword id="KW-0256">Endoplasmic reticulum</keyword>
<keyword id="KW-0443">Lipid metabolism</keyword>
<keyword id="KW-0472">Membrane</keyword>
<keyword id="KW-0521">NADP</keyword>
<keyword id="KW-0560">Oxidoreductase</keyword>
<keyword id="KW-1185">Reference proteome</keyword>
<keyword id="KW-0735">Signal-anchor</keyword>
<keyword id="KW-0812">Transmembrane</keyword>
<keyword id="KW-1133">Transmembrane helix</keyword>
<name>RDH11_MOUSE</name>
<sequence>MFGFLLLLSLPFILYLVTPKIRKMLSSGVCTSNVQLPGKVAIVTGANTGIGKETAKDLAQRGARVYLACRDVDKGELAAREIQAVTGNSQVFVRKLDLADTKSIRAFAKDFLAEEKHLHLLINNAGVMMCPYSKTADGFEMHIGVNHLGHFLLTHLLLEKLKESAPSRIVNLSSLGHHLGRIHFHNLQGEKFYSAGLAYCHSKLANILFTKELAKRLKGSGVTTYSVHPGTVHSELTRYSSIMRWLWQLFFVFIKTPQEGAQTSLYCALTEGLESLSGSHFSDCQLAWVSYQGRNEIIARRLWDVSCDLLGLPVDW</sequence>
<comment type="function">
    <text evidence="2 3 5">Retinol dehydrogenase with a clear preference for NADP (PubMed:12807874, PubMed:29567832). Displays high activity towards 9-cis, 11-cis and all-trans-retinol, and to a lesser extent on 13-cis-retinol (By similarity) (PubMed:12807874). Also exhibits reductive activity towards toxic lipid peroxidation products such as medium-chain aldehydes trans-2-nonenal, nonanal, and cis-6-nonenal (PubMed:12807874). Has no dehydrogenase activity towards steroid (PubMed:12807874). Seems to be required for homeostasis of retinol in liver and testis (PubMed:29567832).</text>
</comment>
<comment type="catalytic activity">
    <reaction evidence="3 5">
        <text>all-trans-retinol + NADP(+) = all-trans-retinal + NADPH + H(+)</text>
        <dbReference type="Rhea" id="RHEA:25033"/>
        <dbReference type="ChEBI" id="CHEBI:15378"/>
        <dbReference type="ChEBI" id="CHEBI:17336"/>
        <dbReference type="ChEBI" id="CHEBI:17898"/>
        <dbReference type="ChEBI" id="CHEBI:57783"/>
        <dbReference type="ChEBI" id="CHEBI:58349"/>
        <dbReference type="EC" id="1.1.1.300"/>
    </reaction>
</comment>
<comment type="catalytic activity">
    <reaction evidence="2">
        <text>11-cis-retinol + NADP(+) = 11-cis-retinal + NADPH + H(+)</text>
        <dbReference type="Rhea" id="RHEA:54912"/>
        <dbReference type="ChEBI" id="CHEBI:15378"/>
        <dbReference type="ChEBI" id="CHEBI:16066"/>
        <dbReference type="ChEBI" id="CHEBI:16302"/>
        <dbReference type="ChEBI" id="CHEBI:57783"/>
        <dbReference type="ChEBI" id="CHEBI:58349"/>
    </reaction>
</comment>
<comment type="catalytic activity">
    <reaction evidence="3">
        <text>9-cis-retinol + NADP(+) = 9-cis-retinal + NADPH + H(+)</text>
        <dbReference type="Rhea" id="RHEA:54916"/>
        <dbReference type="ChEBI" id="CHEBI:15378"/>
        <dbReference type="ChEBI" id="CHEBI:57783"/>
        <dbReference type="ChEBI" id="CHEBI:58349"/>
        <dbReference type="ChEBI" id="CHEBI:78272"/>
        <dbReference type="ChEBI" id="CHEBI:78273"/>
    </reaction>
</comment>
<comment type="catalytic activity">
    <reaction evidence="2">
        <text>13-cis-retinol + NADP(+) = 13-cis-retinal + NADPH + H(+)</text>
        <dbReference type="Rhea" id="RHEA:54920"/>
        <dbReference type="ChEBI" id="CHEBI:15378"/>
        <dbReference type="ChEBI" id="CHEBI:45479"/>
        <dbReference type="ChEBI" id="CHEBI:45487"/>
        <dbReference type="ChEBI" id="CHEBI:57783"/>
        <dbReference type="ChEBI" id="CHEBI:58349"/>
    </reaction>
</comment>
<comment type="catalytic activity">
    <reaction evidence="3">
        <text>a medium-chain primary fatty alcohol + NADP(+) = a medium-chain fatty aldehyde + NADPH + H(+)</text>
        <dbReference type="Rhea" id="RHEA:58364"/>
        <dbReference type="ChEBI" id="CHEBI:15378"/>
        <dbReference type="ChEBI" id="CHEBI:57783"/>
        <dbReference type="ChEBI" id="CHEBI:58349"/>
        <dbReference type="ChEBI" id="CHEBI:142605"/>
        <dbReference type="ChEBI" id="CHEBI:142621"/>
    </reaction>
</comment>
<comment type="catalytic activity">
    <reaction evidence="3">
        <text>(2E,6Z)-nona-2,6-dien-1-ol + NADP(+) = (2E,6Z)-nona-2,6-dienal + NADPH + H(+)</text>
        <dbReference type="Rhea" id="RHEA:58368"/>
        <dbReference type="ChEBI" id="CHEBI:7610"/>
        <dbReference type="ChEBI" id="CHEBI:15378"/>
        <dbReference type="ChEBI" id="CHEBI:57783"/>
        <dbReference type="ChEBI" id="CHEBI:58349"/>
        <dbReference type="ChEBI" id="CHEBI:142615"/>
    </reaction>
</comment>
<comment type="catalytic activity">
    <reaction evidence="3">
        <text>(E)-oct-2-en-1-ol + NADP(+) = (2E)-octenal + NADPH + H(+)</text>
        <dbReference type="Rhea" id="RHEA:58372"/>
        <dbReference type="ChEBI" id="CHEBI:15378"/>
        <dbReference type="ChEBI" id="CHEBI:57783"/>
        <dbReference type="ChEBI" id="CHEBI:58349"/>
        <dbReference type="ChEBI" id="CHEBI:61748"/>
        <dbReference type="ChEBI" id="CHEBI:142616"/>
    </reaction>
</comment>
<comment type="catalytic activity">
    <reaction evidence="3">
        <text>(E)-non-2-en-1-ol + NADP(+) = (E)-non-2-enal + NADPH + H(+)</text>
        <dbReference type="Rhea" id="RHEA:58332"/>
        <dbReference type="ChEBI" id="CHEBI:15378"/>
        <dbReference type="ChEBI" id="CHEBI:57783"/>
        <dbReference type="ChEBI" id="CHEBI:58349"/>
        <dbReference type="ChEBI" id="CHEBI:142592"/>
        <dbReference type="ChEBI" id="CHEBI:142604"/>
    </reaction>
</comment>
<comment type="catalytic activity">
    <reaction evidence="3">
        <text>heptan-1-ol + NADP(+) = heptanal + NADPH + H(+)</text>
        <dbReference type="Rhea" id="RHEA:58400"/>
        <dbReference type="ChEBI" id="CHEBI:15378"/>
        <dbReference type="ChEBI" id="CHEBI:34787"/>
        <dbReference type="ChEBI" id="CHEBI:43003"/>
        <dbReference type="ChEBI" id="CHEBI:57783"/>
        <dbReference type="ChEBI" id="CHEBI:58349"/>
    </reaction>
</comment>
<comment type="catalytic activity">
    <reaction evidence="3">
        <text>hexan-1-ol + NADP(+) = hexanal + NADPH + H(+)</text>
        <dbReference type="Rhea" id="RHEA:58404"/>
        <dbReference type="ChEBI" id="CHEBI:15378"/>
        <dbReference type="ChEBI" id="CHEBI:57783"/>
        <dbReference type="ChEBI" id="CHEBI:58349"/>
        <dbReference type="ChEBI" id="CHEBI:87393"/>
        <dbReference type="ChEBI" id="CHEBI:88528"/>
    </reaction>
</comment>
<comment type="catalytic activity">
    <reaction evidence="3">
        <text>decan-1-ol + NADP(+) = decanal + NADPH + H(+)</text>
        <dbReference type="Rhea" id="RHEA:58376"/>
        <dbReference type="ChEBI" id="CHEBI:15378"/>
        <dbReference type="ChEBI" id="CHEBI:28903"/>
        <dbReference type="ChEBI" id="CHEBI:31457"/>
        <dbReference type="ChEBI" id="CHEBI:57783"/>
        <dbReference type="ChEBI" id="CHEBI:58349"/>
    </reaction>
</comment>
<comment type="catalytic activity">
    <reaction evidence="3">
        <text>nonan-1-ol + NADP(+) = nonanal + NADPH + H(+)</text>
        <dbReference type="Rhea" id="RHEA:58380"/>
        <dbReference type="ChEBI" id="CHEBI:15378"/>
        <dbReference type="ChEBI" id="CHEBI:35986"/>
        <dbReference type="ChEBI" id="CHEBI:57783"/>
        <dbReference type="ChEBI" id="CHEBI:58349"/>
        <dbReference type="ChEBI" id="CHEBI:84268"/>
    </reaction>
</comment>
<comment type="catalytic activity">
    <reaction evidence="3">
        <text>octan-1-ol + NADP(+) = octanal + NADPH + H(+)</text>
        <dbReference type="Rhea" id="RHEA:58384"/>
        <dbReference type="ChEBI" id="CHEBI:15378"/>
        <dbReference type="ChEBI" id="CHEBI:16188"/>
        <dbReference type="ChEBI" id="CHEBI:17935"/>
        <dbReference type="ChEBI" id="CHEBI:57783"/>
        <dbReference type="ChEBI" id="CHEBI:58349"/>
    </reaction>
</comment>
<comment type="catalytic activity">
    <reaction evidence="3">
        <text>(Z)-non-6-en-1-ol + NADP(+) = (Z)-non-6-enal + NADPH + H(+)</text>
        <dbReference type="Rhea" id="RHEA:58328"/>
        <dbReference type="ChEBI" id="CHEBI:15378"/>
        <dbReference type="ChEBI" id="CHEBI:57783"/>
        <dbReference type="ChEBI" id="CHEBI:58349"/>
        <dbReference type="ChEBI" id="CHEBI:142591"/>
        <dbReference type="ChEBI" id="CHEBI:142603"/>
    </reaction>
</comment>
<comment type="biophysicochemical properties">
    <kinetics>
        <KM evidence="3">57 uM for all-trans-retinal</KM>
        <KM evidence="3">14 uM for 9-cis-retinal</KM>
        <KM evidence="3">30 uM for nonan-1-ol</KM>
        <KM evidence="3">20 uM for NADPH</KM>
        <text evidence="3">kcat is 167 min(-1) for NADPH as substrate.</text>
    </kinetics>
    <phDependence>
        <text evidence="3">Optimum pH is between 6.5 and 7.5 for nonanal as substrate.</text>
    </phDependence>
</comment>
<comment type="pathway">
    <text evidence="3">Cofactor metabolism; retinol metabolism.</text>
</comment>
<comment type="subcellular location">
    <subcellularLocation>
        <location evidence="3">Endoplasmic reticulum membrane</location>
        <topology evidence="3">Single-pass type II membrane protein</topology>
    </subcellularLocation>
</comment>
<comment type="alternative products">
    <event type="alternative splicing"/>
    <isoform>
        <id>Q9QYF1-1</id>
        <name>1</name>
        <sequence type="displayed"/>
    </isoform>
    <text>A number of isoforms are produced.</text>
</comment>
<comment type="tissue specificity">
    <text evidence="3 4 5">Expressed at high level in liver and testis (PubMed:12807874, PubMed:15790565, PubMed:29567832). Expressed at lower levels in smooth muscle, thymus, submaxillary gland and epididymis. In testis, expression is restricted to pachytene spermatocytes. Also expressed in four layers of the retina, including the outer segment of rods and cones (PubMed:12807874, PubMed:15790565).</text>
</comment>
<comment type="induction">
    <text evidence="3 5">Down-regulated in liver by fasting and rose by refeeding.</text>
</comment>
<comment type="PTM">
    <text evidence="2">Not glycosylated.</text>
</comment>
<comment type="disruption phenotype">
    <text evidence="4 5">Deficient mice are fertile and developed normally but exhibit delayed dark adaptation vision (PubMed:15790565). Testis and livers of deficient mice exhibit a lower rate of all-trans-retinal conversion to all-trans-retinol (PubMed:29567832).</text>
</comment>
<comment type="miscellaneous">
    <text evidence="2">Shows clear specificity for the pro-S hydrogen on C4 of NADPH and the pro-R hydrogen on C15 of retinols.</text>
</comment>
<comment type="similarity">
    <text evidence="8">Belongs to the short-chain dehydrogenases/reductases (SDR) family.</text>
</comment>
<comment type="sequence caution" evidence="8">
    <conflict type="frameshift">
        <sequence resource="EMBL-CDS" id="BAA88521"/>
    </conflict>
</comment>
<dbReference type="EC" id="1.1.1.300" evidence="3 5"/>
<dbReference type="EMBL" id="AB035959">
    <property type="protein sequence ID" value="BAA88521.1"/>
    <property type="status" value="ALT_FRAME"/>
    <property type="molecule type" value="mRNA"/>
</dbReference>
<dbReference type="EMBL" id="AY039032">
    <property type="protein sequence ID" value="AAK91516.1"/>
    <property type="molecule type" value="mRNA"/>
</dbReference>
<dbReference type="EMBL" id="AF474027">
    <property type="protein sequence ID" value="AAL79910.1"/>
    <property type="molecule type" value="mRNA"/>
</dbReference>
<dbReference type="EMBL" id="AK004413">
    <property type="protein sequence ID" value="BAB23296.1"/>
    <property type="molecule type" value="mRNA"/>
</dbReference>
<dbReference type="EMBL" id="AK135443">
    <property type="protein sequence ID" value="BAE22534.1"/>
    <property type="molecule type" value="mRNA"/>
</dbReference>
<dbReference type="EMBL" id="BC018261">
    <property type="protein sequence ID" value="AAH18261.1"/>
    <property type="molecule type" value="mRNA"/>
</dbReference>
<dbReference type="CCDS" id="CCDS36480.1">
    <molecule id="Q9QYF1-1"/>
</dbReference>
<dbReference type="RefSeq" id="NP_067532.2">
    <molecule id="Q9QYF1-1"/>
    <property type="nucleotide sequence ID" value="NM_021557.5"/>
</dbReference>
<dbReference type="SMR" id="Q9QYF1"/>
<dbReference type="BioGRID" id="201376">
    <property type="interactions" value="2"/>
</dbReference>
<dbReference type="FunCoup" id="Q9QYF1">
    <property type="interactions" value="521"/>
</dbReference>
<dbReference type="IntAct" id="Q9QYF1">
    <property type="interactions" value="1"/>
</dbReference>
<dbReference type="STRING" id="10090.ENSMUSP00000124066"/>
<dbReference type="iPTMnet" id="Q9QYF1"/>
<dbReference type="PhosphoSitePlus" id="Q9QYF1"/>
<dbReference type="SwissPalm" id="Q9QYF1"/>
<dbReference type="jPOST" id="Q9QYF1"/>
<dbReference type="PaxDb" id="10090-ENSMUSP00000124066"/>
<dbReference type="PeptideAtlas" id="Q9QYF1"/>
<dbReference type="ProteomicsDB" id="253189">
    <molecule id="Q9QYF1-1"/>
</dbReference>
<dbReference type="Pumba" id="Q9QYF1"/>
<dbReference type="DNASU" id="17252"/>
<dbReference type="Ensembl" id="ENSMUST00000161204.8">
    <molecule id="Q9QYF1-1"/>
    <property type="protein sequence ID" value="ENSMUSP00000124066.2"/>
    <property type="gene ID" value="ENSMUSG00000066441.15"/>
</dbReference>
<dbReference type="GeneID" id="17252"/>
<dbReference type="KEGG" id="mmu:17252"/>
<dbReference type="UCSC" id="uc007oaa.1">
    <molecule id="Q9QYF1-1"/>
    <property type="organism name" value="mouse"/>
</dbReference>
<dbReference type="AGR" id="MGI:102581"/>
<dbReference type="CTD" id="51109"/>
<dbReference type="MGI" id="MGI:102581">
    <property type="gene designation" value="Rdh11"/>
</dbReference>
<dbReference type="VEuPathDB" id="HostDB:ENSMUSG00000066441"/>
<dbReference type="eggNOG" id="KOG1208">
    <property type="taxonomic scope" value="Eukaryota"/>
</dbReference>
<dbReference type="GeneTree" id="ENSGT00940000158191"/>
<dbReference type="InParanoid" id="Q9QYF1"/>
<dbReference type="OMA" id="APHIRRY"/>
<dbReference type="OrthoDB" id="191139at2759"/>
<dbReference type="PhylomeDB" id="Q9QYF1"/>
<dbReference type="TreeFam" id="TF105429"/>
<dbReference type="BRENDA" id="1.1.1.300">
    <property type="organism ID" value="3474"/>
</dbReference>
<dbReference type="Reactome" id="R-MMU-2453902">
    <property type="pathway name" value="The canonical retinoid cycle in rods (twilight vision)"/>
</dbReference>
<dbReference type="Reactome" id="R-MMU-5365859">
    <property type="pathway name" value="RA biosynthesis pathway"/>
</dbReference>
<dbReference type="Reactome" id="R-MMU-975634">
    <property type="pathway name" value="Retinoid metabolism and transport"/>
</dbReference>
<dbReference type="UniPathway" id="UPA00912"/>
<dbReference type="BioGRID-ORCS" id="17252">
    <property type="hits" value="7 hits in 78 CRISPR screens"/>
</dbReference>
<dbReference type="ChiTaRS" id="Rdh11">
    <property type="organism name" value="mouse"/>
</dbReference>
<dbReference type="PRO" id="PR:Q9QYF1"/>
<dbReference type="Proteomes" id="UP000000589">
    <property type="component" value="Chromosome 12"/>
</dbReference>
<dbReference type="RNAct" id="Q9QYF1">
    <property type="molecule type" value="protein"/>
</dbReference>
<dbReference type="Bgee" id="ENSMUSG00000066441">
    <property type="expression patterns" value="Expressed in spermatocyte and 265 other cell types or tissues"/>
</dbReference>
<dbReference type="ExpressionAtlas" id="Q9QYF1">
    <property type="expression patterns" value="baseline and differential"/>
</dbReference>
<dbReference type="GO" id="GO:0005789">
    <property type="term" value="C:endoplasmic reticulum membrane"/>
    <property type="evidence" value="ECO:0007669"/>
    <property type="project" value="UniProtKB-SubCell"/>
</dbReference>
<dbReference type="GO" id="GO:0001917">
    <property type="term" value="C:photoreceptor inner segment"/>
    <property type="evidence" value="ECO:0000314"/>
    <property type="project" value="MGI"/>
</dbReference>
<dbReference type="GO" id="GO:0102354">
    <property type="term" value="F:11-cis-retinol dehydrogenase activity"/>
    <property type="evidence" value="ECO:0007669"/>
    <property type="project" value="RHEA"/>
</dbReference>
<dbReference type="GO" id="GO:0033721">
    <property type="term" value="F:aldehyde dehydrogenase (NADP+) activity"/>
    <property type="evidence" value="ECO:0000314"/>
    <property type="project" value="UniProtKB"/>
</dbReference>
<dbReference type="GO" id="GO:0004745">
    <property type="term" value="F:all-trans-retinol dehydrogenase (NAD+) activity"/>
    <property type="evidence" value="ECO:0000250"/>
    <property type="project" value="UniProtKB"/>
</dbReference>
<dbReference type="GO" id="GO:0052650">
    <property type="term" value="F:all-trans-retinol dehydrogenase (NADP+) activity"/>
    <property type="evidence" value="ECO:0000266"/>
    <property type="project" value="MGI"/>
</dbReference>
<dbReference type="GO" id="GO:0110095">
    <property type="term" value="P:cellular detoxification of aldehyde"/>
    <property type="evidence" value="ECO:0000314"/>
    <property type="project" value="UniProtKB"/>
</dbReference>
<dbReference type="GO" id="GO:0042574">
    <property type="term" value="P:retinal metabolic process"/>
    <property type="evidence" value="ECO:0000266"/>
    <property type="project" value="MGI"/>
</dbReference>
<dbReference type="GO" id="GO:0042572">
    <property type="term" value="P:retinol metabolic process"/>
    <property type="evidence" value="ECO:0000315"/>
    <property type="project" value="UniProtKB"/>
</dbReference>
<dbReference type="GO" id="GO:0007601">
    <property type="term" value="P:visual perception"/>
    <property type="evidence" value="ECO:0000315"/>
    <property type="project" value="UniProtKB"/>
</dbReference>
<dbReference type="FunFam" id="3.40.50.720:FF:000145">
    <property type="entry name" value="Retinol dehydrogenase 12"/>
    <property type="match status" value="1"/>
</dbReference>
<dbReference type="Gene3D" id="3.40.50.720">
    <property type="entry name" value="NAD(P)-binding Rossmann-like Domain"/>
    <property type="match status" value="1"/>
</dbReference>
<dbReference type="InterPro" id="IPR036291">
    <property type="entry name" value="NAD(P)-bd_dom_sf"/>
</dbReference>
<dbReference type="InterPro" id="IPR002347">
    <property type="entry name" value="SDR_fam"/>
</dbReference>
<dbReference type="PANTHER" id="PTHR43157">
    <property type="entry name" value="PHOSPHATIDYLINOSITOL-GLYCAN BIOSYNTHESIS CLASS F PROTEIN-RELATED"/>
    <property type="match status" value="1"/>
</dbReference>
<dbReference type="PANTHER" id="PTHR43157:SF70">
    <property type="entry name" value="RETINOL DEHYDROGENASE 11"/>
    <property type="match status" value="1"/>
</dbReference>
<dbReference type="Pfam" id="PF00106">
    <property type="entry name" value="adh_short"/>
    <property type="match status" value="1"/>
</dbReference>
<dbReference type="PRINTS" id="PR00081">
    <property type="entry name" value="GDHRDH"/>
</dbReference>
<dbReference type="PRINTS" id="PR00080">
    <property type="entry name" value="SDRFAMILY"/>
</dbReference>
<dbReference type="SUPFAM" id="SSF51735">
    <property type="entry name" value="NAD(P)-binding Rossmann-fold domains"/>
    <property type="match status" value="1"/>
</dbReference>
<organism>
    <name type="scientific">Mus musculus</name>
    <name type="common">Mouse</name>
    <dbReference type="NCBI Taxonomy" id="10090"/>
    <lineage>
        <taxon>Eukaryota</taxon>
        <taxon>Metazoa</taxon>
        <taxon>Chordata</taxon>
        <taxon>Craniata</taxon>
        <taxon>Vertebrata</taxon>
        <taxon>Euteleostomi</taxon>
        <taxon>Mammalia</taxon>
        <taxon>Eutheria</taxon>
        <taxon>Euarchontoglires</taxon>
        <taxon>Glires</taxon>
        <taxon>Rodentia</taxon>
        <taxon>Myomorpha</taxon>
        <taxon>Muroidea</taxon>
        <taxon>Muridae</taxon>
        <taxon>Murinae</taxon>
        <taxon>Mus</taxon>
        <taxon>Mus</taxon>
    </lineage>
</organism>
<protein>
    <recommendedName>
        <fullName>Retinol dehydrogenase 11</fullName>
        <ecNumber evidence="3 5">1.1.1.300</ecNumber>
    </recommendedName>
    <alternativeName>
        <fullName>Androgen-regulated short-chain dehydrogenase/reductase 1</fullName>
    </alternativeName>
    <alternativeName>
        <fullName>Cell line MC/9.IL4-derived protein 1</fullName>
    </alternativeName>
    <alternativeName>
        <fullName>M42C60</fullName>
    </alternativeName>
    <alternativeName>
        <fullName evidence="6">Prostate short-chain dehydrogenase/reductase 1</fullName>
    </alternativeName>
    <alternativeName>
        <fullName>Retinal reductase 1</fullName>
        <shortName>RalR1</shortName>
    </alternativeName>
    <alternativeName>
        <fullName evidence="7">Short-chain aldehyde dehydrogenase</fullName>
        <shortName evidence="7">SCALD</shortName>
    </alternativeName>
</protein>
<feature type="chain" id="PRO_0000054764" description="Retinol dehydrogenase 11">
    <location>
        <begin position="1"/>
        <end position="316"/>
    </location>
</feature>
<feature type="transmembrane region" description="Helical; Signal-anchor for type II membrane protein" evidence="3">
    <location>
        <begin position="1"/>
        <end position="21"/>
    </location>
</feature>
<feature type="topological domain" description="Cytoplasmic" evidence="3">
    <location>
        <begin position="22"/>
        <end position="316"/>
    </location>
</feature>
<feature type="active site" description="Proton acceptor" evidence="1">
    <location>
        <position position="199"/>
    </location>
</feature>
<feature type="binding site" evidence="1">
    <location>
        <begin position="45"/>
        <end position="51"/>
    </location>
    <ligand>
        <name>NADP(+)</name>
        <dbReference type="ChEBI" id="CHEBI:58349"/>
    </ligand>
</feature>
<feature type="binding site" evidence="1">
    <location>
        <position position="174"/>
    </location>
    <ligand>
        <name>substrate</name>
    </ligand>
</feature>
<feature type="modified residue" description="N6-acetyllysine" evidence="2">
    <location>
        <position position="109"/>
    </location>
</feature>
<feature type="sequence conflict" description="In Ref. 1; BAA88521." evidence="8" ref="1">
    <original>R</original>
    <variation>G</variation>
    <location>
        <position position="238"/>
    </location>
</feature>
<feature type="sequence conflict" description="In Ref. 1; BAA88521." evidence="8" ref="1">
    <original>S</original>
    <variation>R</variation>
    <location>
        <position position="279"/>
    </location>
</feature>
<accession>Q9QYF1</accession>
<accession>Q3UXM9</accession>
<accession>Q9D0U5</accession>
<reference key="1">
    <citation type="journal article" date="1994" name="Blood">
        <title>Characterization of cell phenotype by a novel cDNA library subtraction system: expression of CD8 alpha in a mast cell-derived interleukin-4-dependent cell line.</title>
        <authorList>
            <person name="Hara T."/>
            <person name="Harada N."/>
            <person name="Mitsui H."/>
            <person name="Miura T."/>
            <person name="Ishizaka T."/>
            <person name="Miyajima A."/>
        </authorList>
    </citation>
    <scope>NUCLEOTIDE SEQUENCE [MRNA]</scope>
    <scope>ALTERNATIVE SPLICING</scope>
    <source>
        <tissue>Mast cell</tissue>
    </source>
</reference>
<reference key="2">
    <citation type="journal article" date="2002" name="Gene">
        <title>Isolation and characterization of the murine prostate short-chain dehydrogenase/reductase 1 (Psdr1) gene, a new member of the short-chain steroid dehydrogenase/reductase family.</title>
        <authorList>
            <person name="Moore S."/>
            <person name="Pritchard C."/>
            <person name="Lin B."/>
            <person name="Ferguson C."/>
            <person name="Nelson P.S."/>
        </authorList>
    </citation>
    <scope>NUCLEOTIDE SEQUENCE [MRNA]</scope>
    <source>
        <tissue>Testis</tissue>
    </source>
</reference>
<reference key="3">
    <citation type="journal article" date="2003" name="J. Biol. Chem.">
        <title>Characterization of mouse short-chain aldehyde reductase (SCALD), an enzyme regulated by sterol regulatory element-binding proteins.</title>
        <authorList>
            <person name="Kasus-Jacobi A."/>
            <person name="Ou J."/>
            <person name="Bashmakov Y.K."/>
            <person name="Shelton J.M."/>
            <person name="Richardson J.A."/>
            <person name="Goldstein J.L."/>
            <person name="Brown M.S."/>
        </authorList>
    </citation>
    <scope>NUCLEOTIDE SEQUENCE [MRNA]</scope>
    <scope>TISSUE SPECIFICITY</scope>
    <scope>CATALYTIC ACTIVITY</scope>
    <scope>BIOPHYSICOCHEMICAL PROPERTIES</scope>
    <scope>SUBSTRATE SPECIFICITY</scope>
    <scope>INDUCTION</scope>
    <scope>TOPOLOGY</scope>
</reference>
<reference key="4">
    <citation type="journal article" date="2005" name="Science">
        <title>The transcriptional landscape of the mammalian genome.</title>
        <authorList>
            <person name="Carninci P."/>
            <person name="Kasukawa T."/>
            <person name="Katayama S."/>
            <person name="Gough J."/>
            <person name="Frith M.C."/>
            <person name="Maeda N."/>
            <person name="Oyama R."/>
            <person name="Ravasi T."/>
            <person name="Lenhard B."/>
            <person name="Wells C."/>
            <person name="Kodzius R."/>
            <person name="Shimokawa K."/>
            <person name="Bajic V.B."/>
            <person name="Brenner S.E."/>
            <person name="Batalov S."/>
            <person name="Forrest A.R."/>
            <person name="Zavolan M."/>
            <person name="Davis M.J."/>
            <person name="Wilming L.G."/>
            <person name="Aidinis V."/>
            <person name="Allen J.E."/>
            <person name="Ambesi-Impiombato A."/>
            <person name="Apweiler R."/>
            <person name="Aturaliya R.N."/>
            <person name="Bailey T.L."/>
            <person name="Bansal M."/>
            <person name="Baxter L."/>
            <person name="Beisel K.W."/>
            <person name="Bersano T."/>
            <person name="Bono H."/>
            <person name="Chalk A.M."/>
            <person name="Chiu K.P."/>
            <person name="Choudhary V."/>
            <person name="Christoffels A."/>
            <person name="Clutterbuck D.R."/>
            <person name="Crowe M.L."/>
            <person name="Dalla E."/>
            <person name="Dalrymple B.P."/>
            <person name="de Bono B."/>
            <person name="Della Gatta G."/>
            <person name="di Bernardo D."/>
            <person name="Down T."/>
            <person name="Engstrom P."/>
            <person name="Fagiolini M."/>
            <person name="Faulkner G."/>
            <person name="Fletcher C.F."/>
            <person name="Fukushima T."/>
            <person name="Furuno M."/>
            <person name="Futaki S."/>
            <person name="Gariboldi M."/>
            <person name="Georgii-Hemming P."/>
            <person name="Gingeras T.R."/>
            <person name="Gojobori T."/>
            <person name="Green R.E."/>
            <person name="Gustincich S."/>
            <person name="Harbers M."/>
            <person name="Hayashi Y."/>
            <person name="Hensch T.K."/>
            <person name="Hirokawa N."/>
            <person name="Hill D."/>
            <person name="Huminiecki L."/>
            <person name="Iacono M."/>
            <person name="Ikeo K."/>
            <person name="Iwama A."/>
            <person name="Ishikawa T."/>
            <person name="Jakt M."/>
            <person name="Kanapin A."/>
            <person name="Katoh M."/>
            <person name="Kawasawa Y."/>
            <person name="Kelso J."/>
            <person name="Kitamura H."/>
            <person name="Kitano H."/>
            <person name="Kollias G."/>
            <person name="Krishnan S.P."/>
            <person name="Kruger A."/>
            <person name="Kummerfeld S.K."/>
            <person name="Kurochkin I.V."/>
            <person name="Lareau L.F."/>
            <person name="Lazarevic D."/>
            <person name="Lipovich L."/>
            <person name="Liu J."/>
            <person name="Liuni S."/>
            <person name="McWilliam S."/>
            <person name="Madan Babu M."/>
            <person name="Madera M."/>
            <person name="Marchionni L."/>
            <person name="Matsuda H."/>
            <person name="Matsuzawa S."/>
            <person name="Miki H."/>
            <person name="Mignone F."/>
            <person name="Miyake S."/>
            <person name="Morris K."/>
            <person name="Mottagui-Tabar S."/>
            <person name="Mulder N."/>
            <person name="Nakano N."/>
            <person name="Nakauchi H."/>
            <person name="Ng P."/>
            <person name="Nilsson R."/>
            <person name="Nishiguchi S."/>
            <person name="Nishikawa S."/>
            <person name="Nori F."/>
            <person name="Ohara O."/>
            <person name="Okazaki Y."/>
            <person name="Orlando V."/>
            <person name="Pang K.C."/>
            <person name="Pavan W.J."/>
            <person name="Pavesi G."/>
            <person name="Pesole G."/>
            <person name="Petrovsky N."/>
            <person name="Piazza S."/>
            <person name="Reed J."/>
            <person name="Reid J.F."/>
            <person name="Ring B.Z."/>
            <person name="Ringwald M."/>
            <person name="Rost B."/>
            <person name="Ruan Y."/>
            <person name="Salzberg S.L."/>
            <person name="Sandelin A."/>
            <person name="Schneider C."/>
            <person name="Schoenbach C."/>
            <person name="Sekiguchi K."/>
            <person name="Semple C.A."/>
            <person name="Seno S."/>
            <person name="Sessa L."/>
            <person name="Sheng Y."/>
            <person name="Shibata Y."/>
            <person name="Shimada H."/>
            <person name="Shimada K."/>
            <person name="Silva D."/>
            <person name="Sinclair B."/>
            <person name="Sperling S."/>
            <person name="Stupka E."/>
            <person name="Sugiura K."/>
            <person name="Sultana R."/>
            <person name="Takenaka Y."/>
            <person name="Taki K."/>
            <person name="Tammoja K."/>
            <person name="Tan S.L."/>
            <person name="Tang S."/>
            <person name="Taylor M.S."/>
            <person name="Tegner J."/>
            <person name="Teichmann S.A."/>
            <person name="Ueda H.R."/>
            <person name="van Nimwegen E."/>
            <person name="Verardo R."/>
            <person name="Wei C.L."/>
            <person name="Yagi K."/>
            <person name="Yamanishi H."/>
            <person name="Zabarovsky E."/>
            <person name="Zhu S."/>
            <person name="Zimmer A."/>
            <person name="Hide W."/>
            <person name="Bult C."/>
            <person name="Grimmond S.M."/>
            <person name="Teasdale R.D."/>
            <person name="Liu E.T."/>
            <person name="Brusic V."/>
            <person name="Quackenbush J."/>
            <person name="Wahlestedt C."/>
            <person name="Mattick J.S."/>
            <person name="Hume D.A."/>
            <person name="Kai C."/>
            <person name="Sasaki D."/>
            <person name="Tomaru Y."/>
            <person name="Fukuda S."/>
            <person name="Kanamori-Katayama M."/>
            <person name="Suzuki M."/>
            <person name="Aoki J."/>
            <person name="Arakawa T."/>
            <person name="Iida J."/>
            <person name="Imamura K."/>
            <person name="Itoh M."/>
            <person name="Kato T."/>
            <person name="Kawaji H."/>
            <person name="Kawagashira N."/>
            <person name="Kawashima T."/>
            <person name="Kojima M."/>
            <person name="Kondo S."/>
            <person name="Konno H."/>
            <person name="Nakano K."/>
            <person name="Ninomiya N."/>
            <person name="Nishio T."/>
            <person name="Okada M."/>
            <person name="Plessy C."/>
            <person name="Shibata K."/>
            <person name="Shiraki T."/>
            <person name="Suzuki S."/>
            <person name="Tagami M."/>
            <person name="Waki K."/>
            <person name="Watahiki A."/>
            <person name="Okamura-Oho Y."/>
            <person name="Suzuki H."/>
            <person name="Kawai J."/>
            <person name="Hayashizaki Y."/>
        </authorList>
    </citation>
    <scope>NUCLEOTIDE SEQUENCE [LARGE SCALE MRNA]</scope>
    <source>
        <strain>C57BL/6J</strain>
        <tissue>Embryo</tissue>
        <tissue>Muellerian duct</tissue>
    </source>
</reference>
<reference key="5">
    <citation type="journal article" date="2004" name="Genome Res.">
        <title>The status, quality, and expansion of the NIH full-length cDNA project: the Mammalian Gene Collection (MGC).</title>
        <authorList>
            <consortium name="The MGC Project Team"/>
        </authorList>
    </citation>
    <scope>NUCLEOTIDE SEQUENCE [LARGE SCALE MRNA]</scope>
    <source>
        <tissue>Mammary tumor</tissue>
    </source>
</reference>
<reference key="6">
    <citation type="journal article" date="2005" name="J. Biol. Chem.">
        <title>Functional characterization of mouse RDH11 as a retinol dehydrogenase involved in dark adaptation in vivo.</title>
        <authorList>
            <person name="Kasus-Jacobi A."/>
            <person name="Ou J."/>
            <person name="Birch D.G."/>
            <person name="Locke K.G."/>
            <person name="Shelton J.M."/>
            <person name="Richardson J.A."/>
            <person name="Murphy A.J."/>
            <person name="Valenzuela D.M."/>
            <person name="Yancopoulos G.D."/>
            <person name="Edwards A.O."/>
        </authorList>
    </citation>
    <scope>DISRUPTION PHENOTYPE</scope>
    <scope>TISSUE SPECIFICITY</scope>
</reference>
<reference key="7">
    <citation type="journal article" date="2010" name="Cell">
        <title>A tissue-specific atlas of mouse protein phosphorylation and expression.</title>
        <authorList>
            <person name="Huttlin E.L."/>
            <person name="Jedrychowski M.P."/>
            <person name="Elias J.E."/>
            <person name="Goswami T."/>
            <person name="Rad R."/>
            <person name="Beausoleil S.A."/>
            <person name="Villen J."/>
            <person name="Haas W."/>
            <person name="Sowa M.E."/>
            <person name="Gygi S.P."/>
        </authorList>
    </citation>
    <scope>IDENTIFICATION BY MASS SPECTROMETRY [LARGE SCALE ANALYSIS]</scope>
    <source>
        <tissue>Brain</tissue>
        <tissue>Heart</tissue>
        <tissue>Kidney</tissue>
        <tissue>Liver</tissue>
        <tissue>Lung</tissue>
        <tissue>Pancreas</tissue>
        <tissue>Spleen</tissue>
        <tissue>Testis</tissue>
    </source>
</reference>
<reference key="8">
    <citation type="journal article" date="2018" name="J. Biol. Chem.">
        <title>Retinol dehydrogenase 11 is essential for the maintenance of retinol homeostasis in liver and testis in mice.</title>
        <authorList>
            <person name="Belyaeva O.V."/>
            <person name="Wu L."/>
            <person name="Shmarakov I."/>
            <person name="Nelson P.S."/>
            <person name="Kedishvili N.Y."/>
        </authorList>
    </citation>
    <scope>DISRUPTION PHENOTYPE</scope>
    <scope>FUNCTION</scope>
    <scope>INDUCTION</scope>
    <scope>TISSUE SPECIFICITY</scope>
    <scope>CATALYTIC ACTIVITY</scope>
</reference>
<evidence type="ECO:0000250" key="1"/>
<evidence type="ECO:0000250" key="2">
    <source>
        <dbReference type="UniProtKB" id="Q8TC12"/>
    </source>
</evidence>
<evidence type="ECO:0000269" key="3">
    <source>
    </source>
</evidence>
<evidence type="ECO:0000269" key="4">
    <source>
    </source>
</evidence>
<evidence type="ECO:0000269" key="5">
    <source>
    </source>
</evidence>
<evidence type="ECO:0000303" key="6">
    <source>
    </source>
</evidence>
<evidence type="ECO:0000303" key="7">
    <source>
    </source>
</evidence>
<evidence type="ECO:0000305" key="8"/>
<proteinExistence type="evidence at protein level"/>
<gene>
    <name type="primary">Rdh11</name>
    <name type="synonym">Arsdr1</name>
    <name type="synonym">Mdt1</name>
    <name evidence="6" type="synonym">Psdr1</name>
</gene>